<feature type="chain" id="PRO_0000141170" description="Ribose-phosphate pyrophosphokinase">
    <location>
        <begin position="1"/>
        <end position="315"/>
    </location>
</feature>
<feature type="active site" evidence="1">
    <location>
        <position position="195"/>
    </location>
</feature>
<feature type="binding site" evidence="1">
    <location>
        <begin position="37"/>
        <end position="39"/>
    </location>
    <ligand>
        <name>ATP</name>
        <dbReference type="ChEBI" id="CHEBI:30616"/>
    </ligand>
</feature>
<feature type="binding site" evidence="1">
    <location>
        <begin position="96"/>
        <end position="97"/>
    </location>
    <ligand>
        <name>ATP</name>
        <dbReference type="ChEBI" id="CHEBI:30616"/>
    </ligand>
</feature>
<feature type="binding site" evidence="1">
    <location>
        <position position="131"/>
    </location>
    <ligand>
        <name>Mg(2+)</name>
        <dbReference type="ChEBI" id="CHEBI:18420"/>
        <label>1</label>
    </ligand>
</feature>
<feature type="binding site" evidence="1">
    <location>
        <position position="171"/>
    </location>
    <ligand>
        <name>Mg(2+)</name>
        <dbReference type="ChEBI" id="CHEBI:18420"/>
        <label>2</label>
    </ligand>
</feature>
<feature type="binding site" evidence="1">
    <location>
        <position position="197"/>
    </location>
    <ligand>
        <name>D-ribose 5-phosphate</name>
        <dbReference type="ChEBI" id="CHEBI:78346"/>
    </ligand>
</feature>
<feature type="binding site" evidence="1">
    <location>
        <position position="221"/>
    </location>
    <ligand>
        <name>D-ribose 5-phosphate</name>
        <dbReference type="ChEBI" id="CHEBI:78346"/>
    </ligand>
</feature>
<feature type="binding site" evidence="1">
    <location>
        <begin position="225"/>
        <end position="229"/>
    </location>
    <ligand>
        <name>D-ribose 5-phosphate</name>
        <dbReference type="ChEBI" id="CHEBI:78346"/>
    </ligand>
</feature>
<keyword id="KW-0067">ATP-binding</keyword>
<keyword id="KW-0963">Cytoplasm</keyword>
<keyword id="KW-0418">Kinase</keyword>
<keyword id="KW-0460">Magnesium</keyword>
<keyword id="KW-0479">Metal-binding</keyword>
<keyword id="KW-0545">Nucleotide biosynthesis</keyword>
<keyword id="KW-0547">Nucleotide-binding</keyword>
<keyword id="KW-1185">Reference proteome</keyword>
<keyword id="KW-0808">Transferase</keyword>
<sequence>MPDIKLFTGNATPELAKRISERLYLSLGDATVGRFSDGEIQVQINENVRGSDVFIIQSTCAPTNDNLMELIVMVDALRRASAGRITAVIPYFGYARQDRRVRSARVPITAKVVADFLSSVGVDRVLTCDLHAEQIQGFFDVPVDNVFGSPVLVHDMLKKIDMQNPIVVSPDIGGVVRARAIAKLLNDTDMAIIDKRRPRANVAQVMHIIGDVAGRDCILVDDMIDTGGTLCKAAEALKERGAKRVFAYATHAVFSGSAAKNLASDALDEVVVTDTIPLSPEIKALNKVRVLTLSGMLAEAIRRISNEESISAMFT</sequence>
<proteinExistence type="inferred from homology"/>
<dbReference type="EC" id="2.7.6.1" evidence="1"/>
<dbReference type="EMBL" id="AE004439">
    <property type="protein sequence ID" value="AAK02328.1"/>
    <property type="molecule type" value="Genomic_DNA"/>
</dbReference>
<dbReference type="RefSeq" id="WP_005724296.1">
    <property type="nucleotide sequence ID" value="NC_002663.1"/>
</dbReference>
<dbReference type="SMR" id="Q9CP22"/>
<dbReference type="STRING" id="272843.PM0244"/>
<dbReference type="EnsemblBacteria" id="AAK02328">
    <property type="protein sequence ID" value="AAK02328"/>
    <property type="gene ID" value="PM0244"/>
</dbReference>
<dbReference type="KEGG" id="pmu:PM0244"/>
<dbReference type="HOGENOM" id="CLU_033546_2_0_6"/>
<dbReference type="OrthoDB" id="9777067at2"/>
<dbReference type="UniPathway" id="UPA00087">
    <property type="reaction ID" value="UER00172"/>
</dbReference>
<dbReference type="Proteomes" id="UP000000809">
    <property type="component" value="Chromosome"/>
</dbReference>
<dbReference type="GO" id="GO:0005737">
    <property type="term" value="C:cytoplasm"/>
    <property type="evidence" value="ECO:0007669"/>
    <property type="project" value="UniProtKB-SubCell"/>
</dbReference>
<dbReference type="GO" id="GO:0002189">
    <property type="term" value="C:ribose phosphate diphosphokinase complex"/>
    <property type="evidence" value="ECO:0007669"/>
    <property type="project" value="TreeGrafter"/>
</dbReference>
<dbReference type="GO" id="GO:0005524">
    <property type="term" value="F:ATP binding"/>
    <property type="evidence" value="ECO:0007669"/>
    <property type="project" value="UniProtKB-KW"/>
</dbReference>
<dbReference type="GO" id="GO:0016301">
    <property type="term" value="F:kinase activity"/>
    <property type="evidence" value="ECO:0007669"/>
    <property type="project" value="UniProtKB-KW"/>
</dbReference>
<dbReference type="GO" id="GO:0000287">
    <property type="term" value="F:magnesium ion binding"/>
    <property type="evidence" value="ECO:0007669"/>
    <property type="project" value="UniProtKB-UniRule"/>
</dbReference>
<dbReference type="GO" id="GO:0004749">
    <property type="term" value="F:ribose phosphate diphosphokinase activity"/>
    <property type="evidence" value="ECO:0007669"/>
    <property type="project" value="UniProtKB-UniRule"/>
</dbReference>
<dbReference type="GO" id="GO:0006015">
    <property type="term" value="P:5-phosphoribose 1-diphosphate biosynthetic process"/>
    <property type="evidence" value="ECO:0007669"/>
    <property type="project" value="UniProtKB-UniRule"/>
</dbReference>
<dbReference type="GO" id="GO:0006164">
    <property type="term" value="P:purine nucleotide biosynthetic process"/>
    <property type="evidence" value="ECO:0007669"/>
    <property type="project" value="TreeGrafter"/>
</dbReference>
<dbReference type="GO" id="GO:0009156">
    <property type="term" value="P:ribonucleoside monophosphate biosynthetic process"/>
    <property type="evidence" value="ECO:0007669"/>
    <property type="project" value="InterPro"/>
</dbReference>
<dbReference type="CDD" id="cd06223">
    <property type="entry name" value="PRTases_typeI"/>
    <property type="match status" value="1"/>
</dbReference>
<dbReference type="FunFam" id="3.40.50.2020:FF:000001">
    <property type="entry name" value="Ribose-phosphate pyrophosphokinase"/>
    <property type="match status" value="1"/>
</dbReference>
<dbReference type="Gene3D" id="3.40.50.2020">
    <property type="match status" value="2"/>
</dbReference>
<dbReference type="HAMAP" id="MF_00583_B">
    <property type="entry name" value="RibP_PPkinase_B"/>
    <property type="match status" value="1"/>
</dbReference>
<dbReference type="InterPro" id="IPR000842">
    <property type="entry name" value="PRib_PP_synth_CS"/>
</dbReference>
<dbReference type="InterPro" id="IPR029099">
    <property type="entry name" value="Pribosyltran_N"/>
</dbReference>
<dbReference type="InterPro" id="IPR000836">
    <property type="entry name" value="PRibTrfase_dom"/>
</dbReference>
<dbReference type="InterPro" id="IPR029057">
    <property type="entry name" value="PRTase-like"/>
</dbReference>
<dbReference type="InterPro" id="IPR005946">
    <property type="entry name" value="Rib-P_diPkinase"/>
</dbReference>
<dbReference type="InterPro" id="IPR037515">
    <property type="entry name" value="Rib-P_diPkinase_bac"/>
</dbReference>
<dbReference type="NCBIfam" id="NF002320">
    <property type="entry name" value="PRK01259.1"/>
    <property type="match status" value="1"/>
</dbReference>
<dbReference type="NCBIfam" id="TIGR01251">
    <property type="entry name" value="ribP_PPkin"/>
    <property type="match status" value="1"/>
</dbReference>
<dbReference type="PANTHER" id="PTHR10210">
    <property type="entry name" value="RIBOSE-PHOSPHATE DIPHOSPHOKINASE FAMILY MEMBER"/>
    <property type="match status" value="1"/>
</dbReference>
<dbReference type="PANTHER" id="PTHR10210:SF41">
    <property type="entry name" value="RIBOSE-PHOSPHATE PYROPHOSPHOKINASE 1, CHLOROPLASTIC"/>
    <property type="match status" value="1"/>
</dbReference>
<dbReference type="Pfam" id="PF14572">
    <property type="entry name" value="Pribosyl_synth"/>
    <property type="match status" value="1"/>
</dbReference>
<dbReference type="Pfam" id="PF13793">
    <property type="entry name" value="Pribosyltran_N"/>
    <property type="match status" value="1"/>
</dbReference>
<dbReference type="SMART" id="SM01400">
    <property type="entry name" value="Pribosyltran_N"/>
    <property type="match status" value="1"/>
</dbReference>
<dbReference type="SUPFAM" id="SSF53271">
    <property type="entry name" value="PRTase-like"/>
    <property type="match status" value="1"/>
</dbReference>
<dbReference type="PROSITE" id="PS00114">
    <property type="entry name" value="PRPP_SYNTHASE"/>
    <property type="match status" value="1"/>
</dbReference>
<gene>
    <name evidence="1" type="primary">prs</name>
    <name type="synonym">prsA</name>
    <name type="ordered locus">PM0244</name>
</gene>
<organism>
    <name type="scientific">Pasteurella multocida (strain Pm70)</name>
    <dbReference type="NCBI Taxonomy" id="272843"/>
    <lineage>
        <taxon>Bacteria</taxon>
        <taxon>Pseudomonadati</taxon>
        <taxon>Pseudomonadota</taxon>
        <taxon>Gammaproteobacteria</taxon>
        <taxon>Pasteurellales</taxon>
        <taxon>Pasteurellaceae</taxon>
        <taxon>Pasteurella</taxon>
    </lineage>
</organism>
<accession>Q9CP22</accession>
<evidence type="ECO:0000255" key="1">
    <source>
        <dbReference type="HAMAP-Rule" id="MF_00583"/>
    </source>
</evidence>
<reference key="1">
    <citation type="journal article" date="2001" name="Proc. Natl. Acad. Sci. U.S.A.">
        <title>Complete genomic sequence of Pasteurella multocida Pm70.</title>
        <authorList>
            <person name="May B.J."/>
            <person name="Zhang Q."/>
            <person name="Li L.L."/>
            <person name="Paustian M.L."/>
            <person name="Whittam T.S."/>
            <person name="Kapur V."/>
        </authorList>
    </citation>
    <scope>NUCLEOTIDE SEQUENCE [LARGE SCALE GENOMIC DNA]</scope>
    <source>
        <strain>Pm70</strain>
    </source>
</reference>
<comment type="function">
    <text evidence="1">Involved in the biosynthesis of the central metabolite phospho-alpha-D-ribosyl-1-pyrophosphate (PRPP) via the transfer of pyrophosphoryl group from ATP to 1-hydroxyl of ribose-5-phosphate (Rib-5-P).</text>
</comment>
<comment type="catalytic activity">
    <reaction evidence="1">
        <text>D-ribose 5-phosphate + ATP = 5-phospho-alpha-D-ribose 1-diphosphate + AMP + H(+)</text>
        <dbReference type="Rhea" id="RHEA:15609"/>
        <dbReference type="ChEBI" id="CHEBI:15378"/>
        <dbReference type="ChEBI" id="CHEBI:30616"/>
        <dbReference type="ChEBI" id="CHEBI:58017"/>
        <dbReference type="ChEBI" id="CHEBI:78346"/>
        <dbReference type="ChEBI" id="CHEBI:456215"/>
        <dbReference type="EC" id="2.7.6.1"/>
    </reaction>
</comment>
<comment type="cofactor">
    <cofactor evidence="1">
        <name>Mg(2+)</name>
        <dbReference type="ChEBI" id="CHEBI:18420"/>
    </cofactor>
    <text evidence="1">Binds 2 Mg(2+) ions per subunit.</text>
</comment>
<comment type="pathway">
    <text evidence="1">Metabolic intermediate biosynthesis; 5-phospho-alpha-D-ribose 1-diphosphate biosynthesis; 5-phospho-alpha-D-ribose 1-diphosphate from D-ribose 5-phosphate (route I): step 1/1.</text>
</comment>
<comment type="subunit">
    <text evidence="1">Homohexamer.</text>
</comment>
<comment type="subcellular location">
    <subcellularLocation>
        <location evidence="1">Cytoplasm</location>
    </subcellularLocation>
</comment>
<comment type="similarity">
    <text evidence="1">Belongs to the ribose-phosphate pyrophosphokinase family. Class I subfamily.</text>
</comment>
<name>KPRS_PASMU</name>
<protein>
    <recommendedName>
        <fullName evidence="1">Ribose-phosphate pyrophosphokinase</fullName>
        <shortName evidence="1">RPPK</shortName>
        <ecNumber evidence="1">2.7.6.1</ecNumber>
    </recommendedName>
    <alternativeName>
        <fullName evidence="1">5-phospho-D-ribosyl alpha-1-diphosphate synthase</fullName>
    </alternativeName>
    <alternativeName>
        <fullName evidence="1">Phosphoribosyl diphosphate synthase</fullName>
    </alternativeName>
    <alternativeName>
        <fullName evidence="1">Phosphoribosyl pyrophosphate synthase</fullName>
        <shortName evidence="1">P-Rib-PP synthase</shortName>
        <shortName evidence="1">PRPP synthase</shortName>
        <shortName evidence="1">PRPPase</shortName>
    </alternativeName>
</protein>